<reference key="1">
    <citation type="journal article" date="2008" name="J. Bacteriol.">
        <title>Genome sequence of a nephritogenic and highly transformable M49 strain of Streptococcus pyogenes.</title>
        <authorList>
            <person name="McShan W.M."/>
            <person name="Ferretti J.J."/>
            <person name="Karasawa T."/>
            <person name="Suvorov A.N."/>
            <person name="Lin S."/>
            <person name="Qin B."/>
            <person name="Jia H."/>
            <person name="Kenton S."/>
            <person name="Najar F."/>
            <person name="Wu H."/>
            <person name="Scott J."/>
            <person name="Roe B.A."/>
            <person name="Savic D.J."/>
        </authorList>
    </citation>
    <scope>NUCLEOTIDE SEQUENCE [LARGE SCALE GENOMIC DNA]</scope>
    <source>
        <strain>NZ131</strain>
    </source>
</reference>
<organism>
    <name type="scientific">Streptococcus pyogenes serotype M49 (strain NZ131)</name>
    <dbReference type="NCBI Taxonomy" id="471876"/>
    <lineage>
        <taxon>Bacteria</taxon>
        <taxon>Bacillati</taxon>
        <taxon>Bacillota</taxon>
        <taxon>Bacilli</taxon>
        <taxon>Lactobacillales</taxon>
        <taxon>Streptococcaceae</taxon>
        <taxon>Streptococcus</taxon>
    </lineage>
</organism>
<proteinExistence type="inferred from homology"/>
<evidence type="ECO:0000255" key="1">
    <source>
        <dbReference type="HAMAP-Rule" id="MF_00366"/>
    </source>
</evidence>
<sequence>MMLKPSIDTLLDKVPSKYSLVILQAKRAHELEAGATPTQEFKSVKSTLQALEEIESGNVVIHPDPSAKREAVRAKIEAERLAKEEEERKIKEQIAKEKEEEGEKI</sequence>
<gene>
    <name evidence="1" type="primary">rpoZ</name>
    <name type="ordered locus">Spy49_1263c</name>
</gene>
<keyword id="KW-0240">DNA-directed RNA polymerase</keyword>
<keyword id="KW-0548">Nucleotidyltransferase</keyword>
<keyword id="KW-0804">Transcription</keyword>
<keyword id="KW-0808">Transferase</keyword>
<name>RPOZ_STRPZ</name>
<accession>B5XMI5</accession>
<feature type="chain" id="PRO_1000121282" description="DNA-directed RNA polymerase subunit omega">
    <location>
        <begin position="1"/>
        <end position="105"/>
    </location>
</feature>
<comment type="function">
    <text evidence="1">Promotes RNA polymerase assembly. Latches the N- and C-terminal regions of the beta' subunit thereby facilitating its interaction with the beta and alpha subunits.</text>
</comment>
<comment type="catalytic activity">
    <reaction evidence="1">
        <text>RNA(n) + a ribonucleoside 5'-triphosphate = RNA(n+1) + diphosphate</text>
        <dbReference type="Rhea" id="RHEA:21248"/>
        <dbReference type="Rhea" id="RHEA-COMP:14527"/>
        <dbReference type="Rhea" id="RHEA-COMP:17342"/>
        <dbReference type="ChEBI" id="CHEBI:33019"/>
        <dbReference type="ChEBI" id="CHEBI:61557"/>
        <dbReference type="ChEBI" id="CHEBI:140395"/>
        <dbReference type="EC" id="2.7.7.6"/>
    </reaction>
</comment>
<comment type="subunit">
    <text evidence="1">The RNAP catalytic core consists of 2 alpha, 1 beta, 1 beta' and 1 omega subunit. When a sigma factor is associated with the core the holoenzyme is formed, which can initiate transcription.</text>
</comment>
<comment type="similarity">
    <text evidence="1">Belongs to the RNA polymerase subunit omega family.</text>
</comment>
<dbReference type="EC" id="2.7.7.6" evidence="1"/>
<dbReference type="EMBL" id="CP000829">
    <property type="protein sequence ID" value="ACI61547.1"/>
    <property type="molecule type" value="Genomic_DNA"/>
</dbReference>
<dbReference type="SMR" id="B5XMI5"/>
<dbReference type="KEGG" id="soz:Spy49_1263c"/>
<dbReference type="HOGENOM" id="CLU_125406_0_0_9"/>
<dbReference type="Proteomes" id="UP000001039">
    <property type="component" value="Chromosome"/>
</dbReference>
<dbReference type="GO" id="GO:0000428">
    <property type="term" value="C:DNA-directed RNA polymerase complex"/>
    <property type="evidence" value="ECO:0007669"/>
    <property type="project" value="UniProtKB-KW"/>
</dbReference>
<dbReference type="GO" id="GO:0003677">
    <property type="term" value="F:DNA binding"/>
    <property type="evidence" value="ECO:0007669"/>
    <property type="project" value="UniProtKB-UniRule"/>
</dbReference>
<dbReference type="GO" id="GO:0003899">
    <property type="term" value="F:DNA-directed RNA polymerase activity"/>
    <property type="evidence" value="ECO:0007669"/>
    <property type="project" value="UniProtKB-UniRule"/>
</dbReference>
<dbReference type="GO" id="GO:0006351">
    <property type="term" value="P:DNA-templated transcription"/>
    <property type="evidence" value="ECO:0007669"/>
    <property type="project" value="UniProtKB-UniRule"/>
</dbReference>
<dbReference type="Gene3D" id="3.90.940.10">
    <property type="match status" value="1"/>
</dbReference>
<dbReference type="HAMAP" id="MF_00366">
    <property type="entry name" value="RNApol_bact_RpoZ"/>
    <property type="match status" value="1"/>
</dbReference>
<dbReference type="InterPro" id="IPR003716">
    <property type="entry name" value="DNA-dir_RNA_pol_omega"/>
</dbReference>
<dbReference type="InterPro" id="IPR006110">
    <property type="entry name" value="Pol_omega/Rpo6/RPB6"/>
</dbReference>
<dbReference type="InterPro" id="IPR036161">
    <property type="entry name" value="RPB6/omega-like_sf"/>
</dbReference>
<dbReference type="NCBIfam" id="TIGR00690">
    <property type="entry name" value="rpoZ"/>
    <property type="match status" value="1"/>
</dbReference>
<dbReference type="PANTHER" id="PTHR34476">
    <property type="entry name" value="DNA-DIRECTED RNA POLYMERASE SUBUNIT OMEGA"/>
    <property type="match status" value="1"/>
</dbReference>
<dbReference type="PANTHER" id="PTHR34476:SF1">
    <property type="entry name" value="DNA-DIRECTED RNA POLYMERASE SUBUNIT OMEGA"/>
    <property type="match status" value="1"/>
</dbReference>
<dbReference type="Pfam" id="PF01192">
    <property type="entry name" value="RNA_pol_Rpb6"/>
    <property type="match status" value="1"/>
</dbReference>
<dbReference type="SMART" id="SM01409">
    <property type="entry name" value="RNA_pol_Rpb6"/>
    <property type="match status" value="1"/>
</dbReference>
<dbReference type="SUPFAM" id="SSF63562">
    <property type="entry name" value="RPB6/omega subunit-like"/>
    <property type="match status" value="1"/>
</dbReference>
<protein>
    <recommendedName>
        <fullName evidence="1">DNA-directed RNA polymerase subunit omega</fullName>
        <shortName evidence="1">RNAP omega subunit</shortName>
        <ecNumber evidence="1">2.7.7.6</ecNumber>
    </recommendedName>
    <alternativeName>
        <fullName evidence="1">RNA polymerase omega subunit</fullName>
    </alternativeName>
    <alternativeName>
        <fullName evidence="1">Transcriptase subunit omega</fullName>
    </alternativeName>
</protein>